<accession>Q6ZPJ3</accession>
<accession>A2A7X3</accession>
<accession>Q60800</accession>
<accession>Q6PCR9</accession>
<accession>Q7TPN2</accession>
<accession>Q8BLE8</accession>
<proteinExistence type="evidence at protein level"/>
<dbReference type="EC" id="2.3.2.24"/>
<dbReference type="EMBL" id="AK129431">
    <property type="protein sequence ID" value="BAC98241.1"/>
    <property type="status" value="ALT_INIT"/>
    <property type="molecule type" value="mRNA"/>
</dbReference>
<dbReference type="EMBL" id="AL607039">
    <property type="status" value="NOT_ANNOTATED_CDS"/>
    <property type="molecule type" value="Genomic_DNA"/>
</dbReference>
<dbReference type="EMBL" id="AL645851">
    <property type="status" value="NOT_ANNOTATED_CDS"/>
    <property type="molecule type" value="Genomic_DNA"/>
</dbReference>
<dbReference type="EMBL" id="U20780">
    <property type="protein sequence ID" value="AAA69916.1"/>
    <property type="status" value="ALT_FRAME"/>
    <property type="molecule type" value="mRNA"/>
</dbReference>
<dbReference type="EMBL" id="BC059193">
    <property type="protein sequence ID" value="AAH59193.1"/>
    <property type="status" value="ALT_INIT"/>
    <property type="molecule type" value="mRNA"/>
</dbReference>
<dbReference type="EMBL" id="AK045398">
    <property type="protein sequence ID" value="BAC32345.1"/>
    <property type="status" value="ALT_INIT"/>
    <property type="molecule type" value="mRNA"/>
</dbReference>
<dbReference type="CCDS" id="CCDS25670.1"/>
<dbReference type="PIR" id="I49264">
    <property type="entry name" value="I49264"/>
</dbReference>
<dbReference type="RefSeq" id="NP_776116.2">
    <property type="nucleotide sequence ID" value="NM_173755.3"/>
</dbReference>
<dbReference type="SMR" id="Q6ZPJ3"/>
<dbReference type="BioGRID" id="229895">
    <property type="interactions" value="18"/>
</dbReference>
<dbReference type="FunCoup" id="Q6ZPJ3">
    <property type="interactions" value="4578"/>
</dbReference>
<dbReference type="IntAct" id="Q6ZPJ3">
    <property type="interactions" value="5"/>
</dbReference>
<dbReference type="MINT" id="Q6ZPJ3"/>
<dbReference type="STRING" id="10090.ENSMUSP00000080791"/>
<dbReference type="GlyGen" id="Q6ZPJ3">
    <property type="glycosylation" value="2 sites, 1 O-linked glycan (1 site)"/>
</dbReference>
<dbReference type="iPTMnet" id="Q6ZPJ3"/>
<dbReference type="MetOSite" id="Q6ZPJ3"/>
<dbReference type="PhosphoSitePlus" id="Q6ZPJ3"/>
<dbReference type="SwissPalm" id="Q6ZPJ3"/>
<dbReference type="jPOST" id="Q6ZPJ3"/>
<dbReference type="PaxDb" id="10090-ENSMUSP00000080791"/>
<dbReference type="PeptideAtlas" id="Q6ZPJ3"/>
<dbReference type="ProteomicsDB" id="298182"/>
<dbReference type="Pumba" id="Q6ZPJ3"/>
<dbReference type="Antibodypedia" id="32408">
    <property type="antibodies" value="164 antibodies from 35 providers"/>
</dbReference>
<dbReference type="DNASU" id="217342"/>
<dbReference type="Ensembl" id="ENSMUST00000082152.5">
    <property type="protein sequence ID" value="ENSMUSP00000080791.5"/>
    <property type="gene ID" value="ENSMUSG00000020802.9"/>
</dbReference>
<dbReference type="GeneID" id="217342"/>
<dbReference type="KEGG" id="mmu:217342"/>
<dbReference type="UCSC" id="uc007mlm.1">
    <property type="organism name" value="mouse"/>
</dbReference>
<dbReference type="AGR" id="MGI:2444266"/>
<dbReference type="CTD" id="63893"/>
<dbReference type="MGI" id="MGI:2444266">
    <property type="gene designation" value="Ube2o"/>
</dbReference>
<dbReference type="VEuPathDB" id="HostDB:ENSMUSG00000020802"/>
<dbReference type="eggNOG" id="KOG0895">
    <property type="taxonomic scope" value="Eukaryota"/>
</dbReference>
<dbReference type="GeneTree" id="ENSGT00940000160755"/>
<dbReference type="HOGENOM" id="CLU_002088_1_0_1"/>
<dbReference type="InParanoid" id="Q6ZPJ3"/>
<dbReference type="OMA" id="WVKGFED"/>
<dbReference type="OrthoDB" id="47801at2759"/>
<dbReference type="PhylomeDB" id="Q6ZPJ3"/>
<dbReference type="TreeFam" id="TF325556"/>
<dbReference type="BRENDA" id="2.3.2.25">
    <property type="organism ID" value="3474"/>
</dbReference>
<dbReference type="Reactome" id="R-MMU-983168">
    <property type="pathway name" value="Antigen processing: Ubiquitination &amp; Proteasome degradation"/>
</dbReference>
<dbReference type="UniPathway" id="UPA00143"/>
<dbReference type="BioGRID-ORCS" id="217342">
    <property type="hits" value="5 hits in 76 CRISPR screens"/>
</dbReference>
<dbReference type="ChiTaRS" id="Ube2o">
    <property type="organism name" value="mouse"/>
</dbReference>
<dbReference type="PRO" id="PR:Q6ZPJ3"/>
<dbReference type="Proteomes" id="UP000000589">
    <property type="component" value="Chromosome 11"/>
</dbReference>
<dbReference type="RNAct" id="Q6ZPJ3">
    <property type="molecule type" value="protein"/>
</dbReference>
<dbReference type="Bgee" id="ENSMUSG00000020802">
    <property type="expression patterns" value="Expressed in blood and 231 other cell types or tissues"/>
</dbReference>
<dbReference type="GO" id="GO:0005737">
    <property type="term" value="C:cytoplasm"/>
    <property type="evidence" value="ECO:0000250"/>
    <property type="project" value="UniProtKB"/>
</dbReference>
<dbReference type="GO" id="GO:0005829">
    <property type="term" value="C:cytosol"/>
    <property type="evidence" value="ECO:0007669"/>
    <property type="project" value="GOC"/>
</dbReference>
<dbReference type="GO" id="GO:0016604">
    <property type="term" value="C:nuclear body"/>
    <property type="evidence" value="ECO:0007669"/>
    <property type="project" value="Ensembl"/>
</dbReference>
<dbReference type="GO" id="GO:0005634">
    <property type="term" value="C:nucleus"/>
    <property type="evidence" value="ECO:0000250"/>
    <property type="project" value="UniProtKB"/>
</dbReference>
<dbReference type="GO" id="GO:0005524">
    <property type="term" value="F:ATP binding"/>
    <property type="evidence" value="ECO:0007669"/>
    <property type="project" value="UniProtKB-KW"/>
</dbReference>
<dbReference type="GO" id="GO:0061631">
    <property type="term" value="F:ubiquitin conjugating enzyme activity"/>
    <property type="evidence" value="ECO:0000266"/>
    <property type="project" value="MGI"/>
</dbReference>
<dbReference type="GO" id="GO:0061630">
    <property type="term" value="F:ubiquitin protein ligase activity"/>
    <property type="evidence" value="ECO:0000266"/>
    <property type="project" value="MGI"/>
</dbReference>
<dbReference type="GO" id="GO:0004842">
    <property type="term" value="F:ubiquitin-protein transferase activity"/>
    <property type="evidence" value="ECO:0000250"/>
    <property type="project" value="UniProtKB"/>
</dbReference>
<dbReference type="GO" id="GO:0030513">
    <property type="term" value="P:positive regulation of BMP signaling pathway"/>
    <property type="evidence" value="ECO:0000250"/>
    <property type="project" value="UniProtKB"/>
</dbReference>
<dbReference type="GO" id="GO:0070534">
    <property type="term" value="P:protein K63-linked ubiquitination"/>
    <property type="evidence" value="ECO:0000250"/>
    <property type="project" value="UniProtKB"/>
</dbReference>
<dbReference type="GO" id="GO:0006513">
    <property type="term" value="P:protein monoubiquitination"/>
    <property type="evidence" value="ECO:0000250"/>
    <property type="project" value="UniProtKB"/>
</dbReference>
<dbReference type="GO" id="GO:0042147">
    <property type="term" value="P:retrograde transport, endosome to Golgi"/>
    <property type="evidence" value="ECO:0000250"/>
    <property type="project" value="UniProtKB"/>
</dbReference>
<dbReference type="CDD" id="cd23837">
    <property type="entry name" value="UBCc_UBE2O"/>
    <property type="match status" value="1"/>
</dbReference>
<dbReference type="FunFam" id="3.10.110.10:FF:000045">
    <property type="entry name" value="Ubiquitin conjugating enzyme E2 O"/>
    <property type="match status" value="1"/>
</dbReference>
<dbReference type="Gene3D" id="3.10.110.10">
    <property type="entry name" value="Ubiquitin Conjugating Enzyme"/>
    <property type="match status" value="1"/>
</dbReference>
<dbReference type="InterPro" id="IPR000608">
    <property type="entry name" value="UBQ-conjugat_E2_core"/>
</dbReference>
<dbReference type="InterPro" id="IPR016135">
    <property type="entry name" value="UBQ-conjugating_enzyme/RWD"/>
</dbReference>
<dbReference type="PANTHER" id="PTHR46116">
    <property type="entry name" value="(E3-INDEPENDENT) E2 UBIQUITIN-CONJUGATING ENZYME"/>
    <property type="match status" value="1"/>
</dbReference>
<dbReference type="PANTHER" id="PTHR46116:SF15">
    <property type="entry name" value="(E3-INDEPENDENT) E2 UBIQUITIN-CONJUGATING ENZYME"/>
    <property type="match status" value="1"/>
</dbReference>
<dbReference type="Pfam" id="PF23048">
    <property type="entry name" value="SH3-A_UBE2O"/>
    <property type="match status" value="1"/>
</dbReference>
<dbReference type="Pfam" id="PF23043">
    <property type="entry name" value="SH3-B_UBE2O"/>
    <property type="match status" value="1"/>
</dbReference>
<dbReference type="Pfam" id="PF23044">
    <property type="entry name" value="SH3-C_UBE2O"/>
    <property type="match status" value="1"/>
</dbReference>
<dbReference type="Pfam" id="PF23046">
    <property type="entry name" value="tSH3-B_UBE2O"/>
    <property type="match status" value="1"/>
</dbReference>
<dbReference type="Pfam" id="PF00179">
    <property type="entry name" value="UQ_con"/>
    <property type="match status" value="1"/>
</dbReference>
<dbReference type="SMART" id="SM00212">
    <property type="entry name" value="UBCc"/>
    <property type="match status" value="1"/>
</dbReference>
<dbReference type="SUPFAM" id="SSF54495">
    <property type="entry name" value="UBC-like"/>
    <property type="match status" value="1"/>
</dbReference>
<dbReference type="PROSITE" id="PS50127">
    <property type="entry name" value="UBC_2"/>
    <property type="match status" value="1"/>
</dbReference>
<evidence type="ECO:0000250" key="1">
    <source>
        <dbReference type="UniProtKB" id="Q9C0C9"/>
    </source>
</evidence>
<evidence type="ECO:0000255" key="2"/>
<evidence type="ECO:0000255" key="3">
    <source>
        <dbReference type="PROSITE-ProRule" id="PRU00388"/>
    </source>
</evidence>
<evidence type="ECO:0000256" key="4">
    <source>
        <dbReference type="SAM" id="MobiDB-lite"/>
    </source>
</evidence>
<evidence type="ECO:0000269" key="5">
    <source>
    </source>
</evidence>
<evidence type="ECO:0000269" key="6">
    <source>
    </source>
</evidence>
<evidence type="ECO:0000269" key="7">
    <source>
    </source>
</evidence>
<evidence type="ECO:0000269" key="8">
    <source>
    </source>
</evidence>
<evidence type="ECO:0000305" key="9"/>
<evidence type="ECO:0007744" key="10">
    <source>
    </source>
</evidence>
<evidence type="ECO:0007744" key="11">
    <source>
    </source>
</evidence>
<gene>
    <name type="primary">Ube2o</name>
    <name type="synonym">Kiaa1734</name>
</gene>
<comment type="function">
    <text evidence="1">E2/E3 hybrid ubiquitin-protein ligase that displays both E2 and E3 ligase activities and mediates monoubiquitination of target proteins. Negatively regulates TRAF6-mediated NF-kappa-B activation independently of its E2 activity. Acts as a positive regulator of BMP7 signaling by mediating monoubiquitination of SMAD6, thereby regulating adipogenesis. Mediates monoubiquitination at different sites of the nuclear localization signal (NLS) of BAP1, leading to cytoplasmic retention of BAP1. Also able to monoubiquitinate the NLS of other chromatin-associated proteins, such as INO80 and CXXC1, affecting their subcellular location. Acts as a regulator of retrograde transport by assisting the TRIM27:MAGEL2 E3 ubiquitin ligase complex to mediate 'Lys-63'-linked ubiquitination of WASHC1, leading to promote endosomal F-actin assembly.</text>
</comment>
<comment type="catalytic activity">
    <reaction evidence="1 3">
        <text>S-ubiquitinyl-[E1 ubiquitin-activating enzyme]-L-cysteine + [acceptor protein]-L-lysine = [E1 ubiquitin-activating enzyme]-L-cysteine + N(6)-monoubiquitinyl-[acceptor protein]-L-lysine.</text>
        <dbReference type="EC" id="2.3.2.24"/>
    </reaction>
</comment>
<comment type="activity regulation">
    <text evidence="8">Inhibited by inorganic arsenite such as phenylarsenoxides.</text>
</comment>
<comment type="pathway">
    <text evidence="3">Protein modification; protein ubiquitination.</text>
</comment>
<comment type="subunit">
    <text evidence="5 6">Interacts with CPNE1 (via VWFA domain) and CPNE4 (via VWFA domain) (PubMed:12522145). Interacts with UBR2 (PubMed:31268597).</text>
</comment>
<comment type="subcellular location">
    <subcellularLocation>
        <location evidence="1">Cytoplasm</location>
    </subcellularLocation>
    <subcellularLocation>
        <location evidence="1">Nucleus</location>
    </subcellularLocation>
    <text evidence="1">Mainly localizes to the cytoplasm.</text>
</comment>
<comment type="tissue specificity">
    <text evidence="7">Highly expressed in reticulocytes.</text>
</comment>
<comment type="induction">
    <text evidence="7">By EPO/Erythropoietin which induces erythroid differentiation.</text>
</comment>
<comment type="PTM">
    <text evidence="1">Phosphorylated. Phosphorylation affects subcellular location.</text>
</comment>
<comment type="PTM">
    <text evidence="1">Ubiquitinated: autoubiquitinates, possibly affecting its subcellular location.</text>
</comment>
<comment type="similarity">
    <text evidence="3">Belongs to the ubiquitin-conjugating enzyme family.</text>
</comment>
<comment type="sequence caution" evidence="9">
    <conflict type="frameshift">
        <sequence resource="EMBL-CDS" id="AAA69916"/>
    </conflict>
</comment>
<comment type="sequence caution" evidence="9">
    <conflict type="erroneous initiation">
        <sequence resource="EMBL-CDS" id="AAH59193"/>
    </conflict>
    <text>Truncated N-terminus.</text>
</comment>
<comment type="sequence caution" evidence="9">
    <conflict type="erroneous initiation">
        <sequence resource="EMBL-CDS" id="BAC32345"/>
    </conflict>
    <text>Truncated N-terminus.</text>
</comment>
<comment type="sequence caution" evidence="9">
    <conflict type="erroneous initiation">
        <sequence resource="EMBL-CDS" id="BAC98241"/>
    </conflict>
    <text>Extended N-terminus.</text>
</comment>
<keyword id="KW-0067">ATP-binding</keyword>
<keyword id="KW-0175">Coiled coil</keyword>
<keyword id="KW-0963">Cytoplasm</keyword>
<keyword id="KW-0547">Nucleotide-binding</keyword>
<keyword id="KW-0539">Nucleus</keyword>
<keyword id="KW-0597">Phosphoprotein</keyword>
<keyword id="KW-1185">Reference proteome</keyword>
<keyword id="KW-0808">Transferase</keyword>
<keyword id="KW-0832">Ubl conjugation</keyword>
<keyword id="KW-0833">Ubl conjugation pathway</keyword>
<feature type="chain" id="PRO_0000280638" description="(E3-independent) E2 ubiquitin-conjugating enzyme UBE2O">
    <location>
        <begin position="1"/>
        <end position="1288"/>
    </location>
</feature>
<feature type="domain" description="UBC core" evidence="3">
    <location>
        <begin position="950"/>
        <end position="1110"/>
    </location>
</feature>
<feature type="region of interest" description="Disordered" evidence="4">
    <location>
        <begin position="1"/>
        <end position="51"/>
    </location>
</feature>
<feature type="region of interest" description="Disordered" evidence="4">
    <location>
        <begin position="80"/>
        <end position="109"/>
    </location>
</feature>
<feature type="region of interest" description="Disordered" evidence="4">
    <location>
        <begin position="396"/>
        <end position="529"/>
    </location>
</feature>
<feature type="region of interest" description="Disordered" evidence="4">
    <location>
        <begin position="711"/>
        <end position="743"/>
    </location>
</feature>
<feature type="region of interest" description="Disordered" evidence="4">
    <location>
        <begin position="872"/>
        <end position="899"/>
    </location>
</feature>
<feature type="region of interest" description="Disordered" evidence="4">
    <location>
        <begin position="1158"/>
        <end position="1247"/>
    </location>
</feature>
<feature type="coiled-coil region" evidence="2">
    <location>
        <begin position="809"/>
        <end position="879"/>
    </location>
</feature>
<feature type="compositionally biased region" description="Low complexity" evidence="4">
    <location>
        <begin position="1"/>
        <end position="26"/>
    </location>
</feature>
<feature type="compositionally biased region" description="Low complexity" evidence="4">
    <location>
        <begin position="34"/>
        <end position="47"/>
    </location>
</feature>
<feature type="compositionally biased region" description="Basic and acidic residues" evidence="4">
    <location>
        <begin position="401"/>
        <end position="418"/>
    </location>
</feature>
<feature type="compositionally biased region" description="Acidic residues" evidence="4">
    <location>
        <begin position="440"/>
        <end position="450"/>
    </location>
</feature>
<feature type="compositionally biased region" description="Basic and acidic residues" evidence="4">
    <location>
        <begin position="462"/>
        <end position="472"/>
    </location>
</feature>
<feature type="compositionally biased region" description="Acidic residues" evidence="4">
    <location>
        <begin position="473"/>
        <end position="485"/>
    </location>
</feature>
<feature type="compositionally biased region" description="Low complexity" evidence="4">
    <location>
        <begin position="486"/>
        <end position="502"/>
    </location>
</feature>
<feature type="compositionally biased region" description="Basic residues" evidence="4">
    <location>
        <begin position="517"/>
        <end position="528"/>
    </location>
</feature>
<feature type="compositionally biased region" description="Low complexity" evidence="4">
    <location>
        <begin position="717"/>
        <end position="726"/>
    </location>
</feature>
<feature type="compositionally biased region" description="Acidic residues" evidence="4">
    <location>
        <begin position="727"/>
        <end position="737"/>
    </location>
</feature>
<feature type="compositionally biased region" description="Basic and acidic residues" evidence="4">
    <location>
        <begin position="872"/>
        <end position="890"/>
    </location>
</feature>
<feature type="active site" description="Glycyl thioester intermediate" evidence="3">
    <location>
        <position position="1037"/>
    </location>
</feature>
<feature type="modified residue" description="Phosphoserine" evidence="1">
    <location>
        <position position="45"/>
    </location>
</feature>
<feature type="modified residue" description="Phosphoserine" evidence="10 11">
    <location>
        <position position="82"/>
    </location>
</feature>
<feature type="modified residue" description="Phosphoserine" evidence="10 11">
    <location>
        <position position="84"/>
    </location>
</feature>
<feature type="modified residue" description="Phosphoserine" evidence="11">
    <location>
        <position position="394"/>
    </location>
</feature>
<feature type="modified residue" description="Phosphoserine" evidence="11">
    <location>
        <position position="436"/>
    </location>
</feature>
<feature type="modified residue" description="Phosphothreonine" evidence="1">
    <location>
        <position position="483"/>
    </location>
</feature>
<feature type="modified residue" description="Phosphothreonine" evidence="1">
    <location>
        <position position="486"/>
    </location>
</feature>
<feature type="modified residue" description="Phosphoserine" evidence="1">
    <location>
        <position position="510"/>
    </location>
</feature>
<feature type="modified residue" description="Phosphoserine" evidence="10 11">
    <location>
        <position position="833"/>
    </location>
</feature>
<feature type="modified residue" description="Phosphothreonine" evidence="11">
    <location>
        <position position="835"/>
    </location>
</feature>
<feature type="modified residue" description="Phosphoserine" evidence="10 11">
    <location>
        <position position="836"/>
    </location>
</feature>
<feature type="modified residue" description="Phosphoserine" evidence="1">
    <location>
        <position position="893"/>
    </location>
</feature>
<feature type="sequence conflict" description="In Ref. 3; AAA69916." evidence="9" ref="3">
    <original>C</original>
    <variation>S</variation>
    <location>
        <position position="309"/>
    </location>
</feature>
<feature type="sequence conflict" description="In Ref. 3; AAA69916." evidence="9" ref="3">
    <original>SPP</original>
    <variation>CPR</variation>
    <location>
        <begin position="317"/>
        <end position="319"/>
    </location>
</feature>
<feature type="sequence conflict" description="In Ref. 3; AAA69916." evidence="9" ref="3">
    <original>Q</original>
    <variation>H</variation>
    <location>
        <position position="343"/>
    </location>
</feature>
<feature type="sequence conflict" description="In Ref. 4; BAC32345." evidence="9" ref="4">
    <original>A</original>
    <variation>G</variation>
    <location>
        <position position="871"/>
    </location>
</feature>
<feature type="sequence conflict" description="In Ref. 1; BAC98241 and 4; AAH59193." evidence="9" ref="1 4">
    <original>L</original>
    <variation>P</variation>
    <location>
        <position position="1160"/>
    </location>
</feature>
<sequence>MADPAAPAPAQAQAAAAPTPAAAPAAAAPPPAPATDSASGPSSDSGPEAGSQRLLFSHDLVSGRYRGSVHFGLVRLIHGEDSDSEGDDDGRGSSGCSEAGGAGHEEGRASPLRRGYVRVQWYPEGVKQHVKETKLKLEDRSVVPRDVVRHMRSTDSQCGTVIDVNIDCAVKLIGTNCIIYPVNSKDLQHIWPFMYGDYIAYDCWLGKVYDLKNQIILKLSNGARCSMNTEDGAKLYDVCPHVSDSGLFFDDSYGFYPGQVLIGPAKIFSSVQWLSGVKPVLSTKSKFRVVVEEVQVVELKVTWITKSFCPGGTDSVSPPPSIITQENLGRVKRLGCFDHAQRQLGERCLYVFPAKVEPAKIAWECPEKNCAQGEGSMAKKVKRLLKKQVVRIMSCTPDTQCPRDHSMEDPDKKGEARAGSEIGSASPEEQPDGSASPVEMQDEGSEELQETCEPLPPFLLKEGGDDGLHSAEQDADDEAADDTDDTSSVTSSASSTTSSQSGSGTGRKKSIPLSIKNLKRKHKRKKNKVTRDFKPGDRVAVEVVTTMTSADVMWQDGSVECNIRSNDLFPVHHLDNNEFCPGDFVVDKRVQSCPDPAVYGVVQSGDHVGRTCMVKWFKLRPSGDDVELIGEEEDVSVYDIADHPDFRFRTTDIVIRIGNTEDGALPKEDEPSVGQVARVDVSSKVEVVWADNSKTIILPQHLYNIESEIEESDYDSVEGSSSGASSDEWEDDSDSWETDNGLVDDEHPKIEELAAILPAEQPTAPEEDKGVVISEEAATAAIQGAVAMAAPVAGLMEKAGKDGPPKSFRELKEAIKILESLKNMTVEQLLTGSPTSPTVEPEKPTREKKFLDDIKKLQENLKKTLDNVAIAEEEKMEAVPDTERKEEKPEVQSPVKAEWPSETPVLCQQCGGRPGVTFTSAKGEVFSVLEFAPSNHSFKKIEFQPPEAKKFFSTVRKEMALLATSLPDGIMVKTFEDRMDLFSALIKGPTRTPYEDGLYLFDIQLPNIYPAVPPHFCYLSQCSGRLNPNLYDNGKVCVSLLGTWIGKGTERWTSKSSLLQVLISIQGLILVNEPYYNEAGFDSDRGLQEGYENSRCYNEMALIRVVQSMTQLVRRPPEVFEQEIRQHFSVGGWRLVNRIESWLETHAMQERAQVMPNGALKDSSSLEPMAAAELSDSGREEPEDVGMAPGEASQGSDSEGGAQGPASASRDHTEQTETAPDASAPPSVRPKRRRKSYRSFLPEKSGYPDIGFPLFPLSKGFIKSIRGVLTQFRAALLEAGMPESTEDK</sequence>
<protein>
    <recommendedName>
        <fullName>(E3-independent) E2 ubiquitin-conjugating enzyme UBE2O</fullName>
        <ecNumber>2.3.2.24</ecNumber>
    </recommendedName>
    <alternativeName>
        <fullName>E2/E3 hybrid ubiquitin-protein ligase UBE2O</fullName>
    </alternativeName>
    <alternativeName>
        <fullName>Ubiquitin carrier protein O</fullName>
    </alternativeName>
    <alternativeName>
        <fullName>Ubiquitin-conjugating enzyme E2 O</fullName>
    </alternativeName>
    <alternativeName>
        <fullName>Ubiquitin-conjugating enzyme E2 of 230 kDa</fullName>
        <shortName>Ubiquitin-conjugating enzyme E2-230K</shortName>
    </alternativeName>
    <alternativeName>
        <fullName>Ubiquitin-protein ligase O</fullName>
    </alternativeName>
</protein>
<organism>
    <name type="scientific">Mus musculus</name>
    <name type="common">Mouse</name>
    <dbReference type="NCBI Taxonomy" id="10090"/>
    <lineage>
        <taxon>Eukaryota</taxon>
        <taxon>Metazoa</taxon>
        <taxon>Chordata</taxon>
        <taxon>Craniata</taxon>
        <taxon>Vertebrata</taxon>
        <taxon>Euteleostomi</taxon>
        <taxon>Mammalia</taxon>
        <taxon>Eutheria</taxon>
        <taxon>Euarchontoglires</taxon>
        <taxon>Glires</taxon>
        <taxon>Rodentia</taxon>
        <taxon>Myomorpha</taxon>
        <taxon>Muroidea</taxon>
        <taxon>Muridae</taxon>
        <taxon>Murinae</taxon>
        <taxon>Mus</taxon>
        <taxon>Mus</taxon>
    </lineage>
</organism>
<name>UBE2O_MOUSE</name>
<reference key="1">
    <citation type="journal article" date="2003" name="DNA Res.">
        <title>Prediction of the coding sequences of mouse homologues of KIAA gene: III. The complete nucleotide sequences of 500 mouse KIAA-homologous cDNAs identified by screening of terminal sequences of cDNA clones randomly sampled from size-fractionated libraries.</title>
        <authorList>
            <person name="Okazaki N."/>
            <person name="Kikuno R."/>
            <person name="Ohara R."/>
            <person name="Inamoto S."/>
            <person name="Koseki H."/>
            <person name="Hiraoka S."/>
            <person name="Saga Y."/>
            <person name="Nagase T."/>
            <person name="Ohara O."/>
            <person name="Koga H."/>
        </authorList>
    </citation>
    <scope>NUCLEOTIDE SEQUENCE [LARGE SCALE MRNA]</scope>
    <source>
        <tissue>Embryonic tail</tissue>
    </source>
</reference>
<reference key="2">
    <citation type="journal article" date="2009" name="PLoS Biol.">
        <title>Lineage-specific biology revealed by a finished genome assembly of the mouse.</title>
        <authorList>
            <person name="Church D.M."/>
            <person name="Goodstadt L."/>
            <person name="Hillier L.W."/>
            <person name="Zody M.C."/>
            <person name="Goldstein S."/>
            <person name="She X."/>
            <person name="Bult C.J."/>
            <person name="Agarwala R."/>
            <person name="Cherry J.L."/>
            <person name="DiCuccio M."/>
            <person name="Hlavina W."/>
            <person name="Kapustin Y."/>
            <person name="Meric P."/>
            <person name="Maglott D."/>
            <person name="Birtle Z."/>
            <person name="Marques A.C."/>
            <person name="Graves T."/>
            <person name="Zhou S."/>
            <person name="Teague B."/>
            <person name="Potamousis K."/>
            <person name="Churas C."/>
            <person name="Place M."/>
            <person name="Herschleb J."/>
            <person name="Runnheim R."/>
            <person name="Forrest D."/>
            <person name="Amos-Landgraf J."/>
            <person name="Schwartz D.C."/>
            <person name="Cheng Z."/>
            <person name="Lindblad-Toh K."/>
            <person name="Eichler E.E."/>
            <person name="Ponting C.P."/>
        </authorList>
    </citation>
    <scope>NUCLEOTIDE SEQUENCE [LARGE SCALE GENOMIC DNA]</scope>
    <source>
        <strain>C57BL/6J</strain>
    </source>
</reference>
<reference key="3">
    <citation type="journal article" date="1995" name="Proc. Natl. Acad. Sci. U.S.A.">
        <title>Induction of ubiquitin-conjugating enzymes during terminal erythroid differentiation.</title>
        <authorList>
            <person name="Wefes I."/>
            <person name="Mastrandrea L.D."/>
            <person name="Haldeman M."/>
            <person name="Koury S.T."/>
            <person name="Tamburlin J."/>
            <person name="Pickart C.M."/>
            <person name="Finley D."/>
        </authorList>
    </citation>
    <scope>NUCLEOTIDE SEQUENCE [MRNA] OF 103-628</scope>
    <scope>TISSUE SPECIFICITY</scope>
    <scope>INDUCTION</scope>
    <source>
        <tissue>Reticulocyte</tissue>
    </source>
</reference>
<reference key="4">
    <citation type="journal article" date="2004" name="Genome Res.">
        <title>The status, quality, and expansion of the NIH full-length cDNA project: the Mammalian Gene Collection (MGC).</title>
        <authorList>
            <consortium name="The MGC Project Team"/>
        </authorList>
    </citation>
    <scope>NUCLEOTIDE SEQUENCE [LARGE SCALE MRNA] OF 123-1288</scope>
    <source>
        <strain>FVB/N</strain>
        <tissue>Liver</tissue>
    </source>
</reference>
<reference key="5">
    <citation type="journal article" date="2005" name="Science">
        <title>The transcriptional landscape of the mammalian genome.</title>
        <authorList>
            <person name="Carninci P."/>
            <person name="Kasukawa T."/>
            <person name="Katayama S."/>
            <person name="Gough J."/>
            <person name="Frith M.C."/>
            <person name="Maeda N."/>
            <person name="Oyama R."/>
            <person name="Ravasi T."/>
            <person name="Lenhard B."/>
            <person name="Wells C."/>
            <person name="Kodzius R."/>
            <person name="Shimokawa K."/>
            <person name="Bajic V.B."/>
            <person name="Brenner S.E."/>
            <person name="Batalov S."/>
            <person name="Forrest A.R."/>
            <person name="Zavolan M."/>
            <person name="Davis M.J."/>
            <person name="Wilming L.G."/>
            <person name="Aidinis V."/>
            <person name="Allen J.E."/>
            <person name="Ambesi-Impiombato A."/>
            <person name="Apweiler R."/>
            <person name="Aturaliya R.N."/>
            <person name="Bailey T.L."/>
            <person name="Bansal M."/>
            <person name="Baxter L."/>
            <person name="Beisel K.W."/>
            <person name="Bersano T."/>
            <person name="Bono H."/>
            <person name="Chalk A.M."/>
            <person name="Chiu K.P."/>
            <person name="Choudhary V."/>
            <person name="Christoffels A."/>
            <person name="Clutterbuck D.R."/>
            <person name="Crowe M.L."/>
            <person name="Dalla E."/>
            <person name="Dalrymple B.P."/>
            <person name="de Bono B."/>
            <person name="Della Gatta G."/>
            <person name="di Bernardo D."/>
            <person name="Down T."/>
            <person name="Engstrom P."/>
            <person name="Fagiolini M."/>
            <person name="Faulkner G."/>
            <person name="Fletcher C.F."/>
            <person name="Fukushima T."/>
            <person name="Furuno M."/>
            <person name="Futaki S."/>
            <person name="Gariboldi M."/>
            <person name="Georgii-Hemming P."/>
            <person name="Gingeras T.R."/>
            <person name="Gojobori T."/>
            <person name="Green R.E."/>
            <person name="Gustincich S."/>
            <person name="Harbers M."/>
            <person name="Hayashi Y."/>
            <person name="Hensch T.K."/>
            <person name="Hirokawa N."/>
            <person name="Hill D."/>
            <person name="Huminiecki L."/>
            <person name="Iacono M."/>
            <person name="Ikeo K."/>
            <person name="Iwama A."/>
            <person name="Ishikawa T."/>
            <person name="Jakt M."/>
            <person name="Kanapin A."/>
            <person name="Katoh M."/>
            <person name="Kawasawa Y."/>
            <person name="Kelso J."/>
            <person name="Kitamura H."/>
            <person name="Kitano H."/>
            <person name="Kollias G."/>
            <person name="Krishnan S.P."/>
            <person name="Kruger A."/>
            <person name="Kummerfeld S.K."/>
            <person name="Kurochkin I.V."/>
            <person name="Lareau L.F."/>
            <person name="Lazarevic D."/>
            <person name="Lipovich L."/>
            <person name="Liu J."/>
            <person name="Liuni S."/>
            <person name="McWilliam S."/>
            <person name="Madan Babu M."/>
            <person name="Madera M."/>
            <person name="Marchionni L."/>
            <person name="Matsuda H."/>
            <person name="Matsuzawa S."/>
            <person name="Miki H."/>
            <person name="Mignone F."/>
            <person name="Miyake S."/>
            <person name="Morris K."/>
            <person name="Mottagui-Tabar S."/>
            <person name="Mulder N."/>
            <person name="Nakano N."/>
            <person name="Nakauchi H."/>
            <person name="Ng P."/>
            <person name="Nilsson R."/>
            <person name="Nishiguchi S."/>
            <person name="Nishikawa S."/>
            <person name="Nori F."/>
            <person name="Ohara O."/>
            <person name="Okazaki Y."/>
            <person name="Orlando V."/>
            <person name="Pang K.C."/>
            <person name="Pavan W.J."/>
            <person name="Pavesi G."/>
            <person name="Pesole G."/>
            <person name="Petrovsky N."/>
            <person name="Piazza S."/>
            <person name="Reed J."/>
            <person name="Reid J.F."/>
            <person name="Ring B.Z."/>
            <person name="Ringwald M."/>
            <person name="Rost B."/>
            <person name="Ruan Y."/>
            <person name="Salzberg S.L."/>
            <person name="Sandelin A."/>
            <person name="Schneider C."/>
            <person name="Schoenbach C."/>
            <person name="Sekiguchi K."/>
            <person name="Semple C.A."/>
            <person name="Seno S."/>
            <person name="Sessa L."/>
            <person name="Sheng Y."/>
            <person name="Shibata Y."/>
            <person name="Shimada H."/>
            <person name="Shimada K."/>
            <person name="Silva D."/>
            <person name="Sinclair B."/>
            <person name="Sperling S."/>
            <person name="Stupka E."/>
            <person name="Sugiura K."/>
            <person name="Sultana R."/>
            <person name="Takenaka Y."/>
            <person name="Taki K."/>
            <person name="Tammoja K."/>
            <person name="Tan S.L."/>
            <person name="Tang S."/>
            <person name="Taylor M.S."/>
            <person name="Tegner J."/>
            <person name="Teichmann S.A."/>
            <person name="Ueda H.R."/>
            <person name="van Nimwegen E."/>
            <person name="Verardo R."/>
            <person name="Wei C.L."/>
            <person name="Yagi K."/>
            <person name="Yamanishi H."/>
            <person name="Zabarovsky E."/>
            <person name="Zhu S."/>
            <person name="Zimmer A."/>
            <person name="Hide W."/>
            <person name="Bult C."/>
            <person name="Grimmond S.M."/>
            <person name="Teasdale R.D."/>
            <person name="Liu E.T."/>
            <person name="Brusic V."/>
            <person name="Quackenbush J."/>
            <person name="Wahlestedt C."/>
            <person name="Mattick J.S."/>
            <person name="Hume D.A."/>
            <person name="Kai C."/>
            <person name="Sasaki D."/>
            <person name="Tomaru Y."/>
            <person name="Fukuda S."/>
            <person name="Kanamori-Katayama M."/>
            <person name="Suzuki M."/>
            <person name="Aoki J."/>
            <person name="Arakawa T."/>
            <person name="Iida J."/>
            <person name="Imamura K."/>
            <person name="Itoh M."/>
            <person name="Kato T."/>
            <person name="Kawaji H."/>
            <person name="Kawagashira N."/>
            <person name="Kawashima T."/>
            <person name="Kojima M."/>
            <person name="Kondo S."/>
            <person name="Konno H."/>
            <person name="Nakano K."/>
            <person name="Ninomiya N."/>
            <person name="Nishio T."/>
            <person name="Okada M."/>
            <person name="Plessy C."/>
            <person name="Shibata K."/>
            <person name="Shiraki T."/>
            <person name="Suzuki S."/>
            <person name="Tagami M."/>
            <person name="Waki K."/>
            <person name="Watahiki A."/>
            <person name="Okamura-Oho Y."/>
            <person name="Suzuki H."/>
            <person name="Kawai J."/>
            <person name="Hayashizaki Y."/>
        </authorList>
    </citation>
    <scope>NUCLEOTIDE SEQUENCE [LARGE SCALE MRNA] OF 867-1288</scope>
    <source>
        <strain>C57BL/6J</strain>
        <tissue>Corpora quadrigemina</tissue>
    </source>
</reference>
<reference key="6">
    <citation type="journal article" date="1996" name="Biochemistry">
        <title>Mechanism of ubiquitin conjugating enzyme E2-230K: catalysis involving a thiol relay?</title>
        <authorList>
            <person name="Berleth E.S."/>
            <person name="Pickart C.M."/>
        </authorList>
    </citation>
    <scope>ACTIVITY REGULATION</scope>
</reference>
<reference key="7">
    <citation type="journal article" date="2003" name="J. Biol. Chem.">
        <title>Identification of targets for calcium signaling through the copine family of proteins. Characterization of a coiled-coil copine-binding motif.</title>
        <authorList>
            <person name="Tomsig J.L."/>
            <person name="Snyder S.L."/>
            <person name="Creutz C.E."/>
        </authorList>
    </citation>
    <scope>INTERACTION WITH CPNE1 AND CPNE4</scope>
</reference>
<reference key="8">
    <citation type="journal article" date="2007" name="Proc. Natl. Acad. Sci. U.S.A.">
        <title>Large-scale phosphorylation analysis of mouse liver.</title>
        <authorList>
            <person name="Villen J."/>
            <person name="Beausoleil S.A."/>
            <person name="Gerber S.A."/>
            <person name="Gygi S.P."/>
        </authorList>
    </citation>
    <scope>PHOSPHORYLATION [LARGE SCALE ANALYSIS] AT SER-82; SER-84; SER-833 AND SER-836</scope>
    <scope>IDENTIFICATION BY MASS SPECTROMETRY [LARGE SCALE ANALYSIS]</scope>
    <source>
        <tissue>Liver</tissue>
    </source>
</reference>
<reference key="9">
    <citation type="journal article" date="2009" name="Mol. Cell. Proteomics">
        <title>Large scale localization of protein phosphorylation by use of electron capture dissociation mass spectrometry.</title>
        <authorList>
            <person name="Sweet S.M."/>
            <person name="Bailey C.M."/>
            <person name="Cunningham D.L."/>
            <person name="Heath J.K."/>
            <person name="Cooper H.J."/>
        </authorList>
    </citation>
    <scope>IDENTIFICATION BY MASS SPECTROMETRY [LARGE SCALE ANALYSIS]</scope>
    <source>
        <tissue>Embryonic fibroblast</tissue>
    </source>
</reference>
<reference key="10">
    <citation type="journal article" date="2010" name="Cell">
        <title>A tissue-specific atlas of mouse protein phosphorylation and expression.</title>
        <authorList>
            <person name="Huttlin E.L."/>
            <person name="Jedrychowski M.P."/>
            <person name="Elias J.E."/>
            <person name="Goswami T."/>
            <person name="Rad R."/>
            <person name="Beausoleil S.A."/>
            <person name="Villen J."/>
            <person name="Haas W."/>
            <person name="Sowa M.E."/>
            <person name="Gygi S.P."/>
        </authorList>
    </citation>
    <scope>PHOSPHORYLATION [LARGE SCALE ANALYSIS] AT SER-82; SER-84; SER-394; SER-436; SER-833; THR-835 AND SER-836</scope>
    <scope>IDENTIFICATION BY MASS SPECTROMETRY [LARGE SCALE ANALYSIS]</scope>
    <source>
        <tissue>Brain</tissue>
        <tissue>Brown adipose tissue</tissue>
        <tissue>Heart</tissue>
        <tissue>Kidney</tissue>
        <tissue>Liver</tissue>
        <tissue>Lung</tissue>
        <tissue>Pancreas</tissue>
        <tissue>Spleen</tissue>
        <tissue>Testis</tissue>
    </source>
</reference>
<reference key="11">
    <citation type="journal article" date="2019" name="EMBO J.">
        <title>The N-end rule ubiquitin ligase UBR2 mediates NLRP1B inflammasome activation by anthrax lethal toxin.</title>
        <authorList>
            <person name="Xu H."/>
            <person name="Shi J."/>
            <person name="Gao H."/>
            <person name="Liu Y."/>
            <person name="Yang Z."/>
            <person name="Shao F."/>
            <person name="Dong N."/>
        </authorList>
    </citation>
    <scope>INTERACTION WITH UBR2</scope>
</reference>